<name>PSBM_THEVL</name>
<proteinExistence type="evidence at protein level"/>
<organism>
    <name type="scientific">Thermostichus vulcanus</name>
    <name type="common">Synechococcus vulcanus</name>
    <dbReference type="NCBI Taxonomy" id="32053"/>
    <lineage>
        <taxon>Bacteria</taxon>
        <taxon>Bacillati</taxon>
        <taxon>Cyanobacteriota</taxon>
        <taxon>Cyanophyceae</taxon>
        <taxon>Thermostichales</taxon>
        <taxon>Thermostichaceae</taxon>
        <taxon>Thermostichus</taxon>
    </lineage>
</organism>
<reference key="1">
    <citation type="journal article" date="1989" name="FEBS Lett.">
        <title>N-terminal sequencing of low-molecular-mass components in cyanobacterial photosystem II core complex. Two components correspond to unidentified open reading frames of plant chloroplast DNA.</title>
        <authorList>
            <person name="Ikeuchi M."/>
            <person name="Koike H."/>
            <person name="Inoue Y."/>
        </authorList>
    </citation>
    <scope>PROTEIN SEQUENCE OF 1-19</scope>
</reference>
<reference key="2">
    <citation type="journal article" date="2002" name="Plant Cell Physiol.">
        <title>Low-molecular-mass polypeptide components of a photosystem II preparation from the thermophilic cyanobacterium Thermosynechococcus vulcanus.</title>
        <authorList>
            <person name="Kashino Y."/>
            <person name="Koike H."/>
            <person name="Yoshio M."/>
            <person name="Egashira H."/>
            <person name="Ikeuchi M."/>
            <person name="Pakrasi H.B."/>
            <person name="Satoh K."/>
        </authorList>
    </citation>
    <scope>PROTEIN SEQUENCE OF 1-15</scope>
    <scope>COMPOSITION OF PHOTOSYSTEM II</scope>
    <scope>SUBUNIT</scope>
</reference>
<reference key="3">
    <citation type="journal article" date="2009" name="Proc. Natl. Acad. Sci. U.S.A.">
        <title>Location of chloride and its possible functions in oxygen-evolving photosystem II revealed by X-ray crystallography.</title>
        <authorList>
            <person name="Kawakami K."/>
            <person name="Umena Y."/>
            <person name="Kamiya N."/>
            <person name="Shen J.R."/>
        </authorList>
    </citation>
    <scope>X-RAY CRYSTALLOGRAPHY (3.70 ANGSTROMS) IN PHOTOSYSTEM II</scope>
    <scope>FUNCTION</scope>
    <scope>COFACTOR</scope>
    <scope>SUBUNIT</scope>
    <scope>SUBCELLULAR LOCATION</scope>
</reference>
<reference key="4">
    <citation type="journal article" date="2011" name="Nature">
        <title>Crystal structure of oxygen-evolving photosystem II at a resolution of 1.9 A.</title>
        <authorList>
            <person name="Umena Y."/>
            <person name="Kawakami K."/>
            <person name="Shen J.R."/>
            <person name="Kamiya N."/>
        </authorList>
    </citation>
    <scope>X-RAY CRYSTALLOGRAPHY (1.90 ANGSTROMS) IN PHOTOSYSTEM II</scope>
    <scope>COFACTOR</scope>
    <scope>SUBUNIT</scope>
    <scope>SUBCELLULAR LOCATION</scope>
    <scope>TOPOLOGY</scope>
</reference>
<reference key="5">
    <citation type="journal article" date="2013" name="Proc. Natl. Acad. Sci. U.S.A.">
        <title>Structure of Sr-substituted photosystem II at 2.1 A resolution and its implications in the mechanism of water oxidation.</title>
        <authorList>
            <person name="Koua F.H."/>
            <person name="Umena Y."/>
            <person name="Kawakami K."/>
            <person name="Shen J.R."/>
        </authorList>
    </citation>
    <scope>X-RAY CRYSTALLOGRAPHY (2.1 ANGSTROMS) OF 1-34 IN PHOTOSYSTEM II</scope>
    <scope>FUNCTION</scope>
    <scope>COFACTOR</scope>
    <scope>SUBUNIT</scope>
    <scope>SUBCELLULAR LOCATION</scope>
    <scope>N-F-MET</scope>
</reference>
<comment type="function">
    <text evidence="1 2 4 6">One of the components of the core complex of photosystem II (PSII). PSII is a light-driven water:plastoquinone oxidoreductase that uses light energy to abstract electrons from H(2)O, generating O(2) and a proton gradient subsequently used for ATP formation. It consists of a core antenna complex that captures photons, and an electron transfer chain that converts photonic excitation into a charge separation (PubMed:19433803, PubMed:23426624). This subunit is found at the monomer-monomer interface. Probably involved in dimerization of PSII; at the monomer-monomer interface the only protein-protein contacts observed are between the 2 PsbM subunits. Lipids, chlorophylls and carotenoids contribute strongly to PSII dimerization.</text>
</comment>
<comment type="cofactor">
    <text evidence="4 5 6">PSII binds multiple chlorophylls, carotenoids and specific lipids.</text>
</comment>
<comment type="subunit">
    <text evidence="2 3 4 5 6">PSII is composed of 1 copy each of membrane proteins PsbA, PsbB, PsbC, PsbD, PsbE, PsbF, PsbH, PsbI, PsbJ, PsbK, PsbL, PsbM, PsbT, PsbX, PsbY, PsbZ, Psb30/Ycf12, peripheral proteins PsbO, CyanoQ (PsbQ), PsbU, PsbV, PsbU, PsbV and a large number of cofactors. It forms dimeric complexes.</text>
</comment>
<comment type="subcellular location">
    <subcellularLocation>
        <location evidence="2 4 5 6">Cellular thylakoid membrane</location>
        <topology evidence="2 4 5 6">Single-pass membrane protein</topology>
    </subcellularLocation>
</comment>
<comment type="similarity">
    <text evidence="2">Belongs to the PsbM family.</text>
</comment>
<accession>P12312</accession>
<accession>D0VWR9</accession>
<sequence length="36" mass="4015">MEVNQLGFIATALFVLVPSVFLIILYVQTESQQKSS</sequence>
<evidence type="ECO:0000250" key="1">
    <source>
        <dbReference type="UniProtKB" id="Q8DHA7"/>
    </source>
</evidence>
<evidence type="ECO:0000255" key="2">
    <source>
        <dbReference type="HAMAP-Rule" id="MF_00438"/>
    </source>
</evidence>
<evidence type="ECO:0000269" key="3">
    <source>
    </source>
</evidence>
<evidence type="ECO:0000269" key="4">
    <source>
    </source>
</evidence>
<evidence type="ECO:0000269" key="5">
    <source>
    </source>
</evidence>
<evidence type="ECO:0000269" key="6">
    <source>
    </source>
</evidence>
<evidence type="ECO:0000269" key="7">
    <source>
    </source>
</evidence>
<evidence type="ECO:0000303" key="8">
    <source>
    </source>
</evidence>
<evidence type="ECO:0000305" key="9"/>
<evidence type="ECO:0007829" key="10">
    <source>
        <dbReference type="PDB" id="5B66"/>
    </source>
</evidence>
<gene>
    <name evidence="2 8" type="primary">psbM</name>
</gene>
<feature type="chain" id="PRO_0000217588" description="Photosystem II reaction center protein M">
    <location>
        <begin position="1"/>
        <end position="36"/>
    </location>
</feature>
<feature type="topological domain" description="Lumenal" evidence="5">
    <location>
        <begin position="1"/>
        <end position="11"/>
    </location>
</feature>
<feature type="transmembrane region" description="Helical" evidence="5">
    <location>
        <begin position="12"/>
        <end position="27"/>
    </location>
</feature>
<feature type="topological domain" description="Cytoplasmic" evidence="5">
    <location>
        <begin position="28"/>
        <end position="36"/>
    </location>
</feature>
<feature type="modified residue" description="Blocked amino end (Met)" evidence="7">
    <location>
        <position position="1"/>
    </location>
</feature>
<feature type="sequence conflict" description="In Ref. 2; AA sequence." evidence="9" ref="2">
    <original>F</original>
    <variation>L</variation>
    <location>
        <position position="8"/>
    </location>
</feature>
<feature type="helix" evidence="10">
    <location>
        <begin position="7"/>
        <end position="30"/>
    </location>
</feature>
<protein>
    <recommendedName>
        <fullName evidence="2">Photosystem II reaction center protein M</fullName>
        <shortName evidence="2">PSII-M</shortName>
    </recommendedName>
</protein>
<keyword id="KW-0002">3D-structure</keyword>
<keyword id="KW-0903">Direct protein sequencing</keyword>
<keyword id="KW-0472">Membrane</keyword>
<keyword id="KW-0602">Photosynthesis</keyword>
<keyword id="KW-0604">Photosystem II</keyword>
<keyword id="KW-0674">Reaction center</keyword>
<keyword id="KW-0793">Thylakoid</keyword>
<keyword id="KW-0812">Transmembrane</keyword>
<keyword id="KW-1133">Transmembrane helix</keyword>
<dbReference type="PIR" id="S05215">
    <property type="entry name" value="S05215"/>
</dbReference>
<dbReference type="PDB" id="3A0B">
    <property type="method" value="X-ray"/>
    <property type="resolution" value="3.70 A"/>
    <property type="chains" value="M/m=1-36"/>
</dbReference>
<dbReference type="PDB" id="3A0H">
    <property type="method" value="X-ray"/>
    <property type="resolution" value="4.00 A"/>
    <property type="chains" value="M/m=1-36"/>
</dbReference>
<dbReference type="PDB" id="3WU2">
    <property type="method" value="X-ray"/>
    <property type="resolution" value="1.90 A"/>
    <property type="chains" value="M/m=1-36"/>
</dbReference>
<dbReference type="PDB" id="4IL6">
    <property type="method" value="X-ray"/>
    <property type="resolution" value="2.10 A"/>
    <property type="chains" value="M/m=1-34"/>
</dbReference>
<dbReference type="PDB" id="4UB6">
    <property type="method" value="X-ray"/>
    <property type="resolution" value="1.95 A"/>
    <property type="chains" value="M/m=1-36"/>
</dbReference>
<dbReference type="PDB" id="4UB8">
    <property type="method" value="X-ray"/>
    <property type="resolution" value="1.95 A"/>
    <property type="chains" value="M/m=1-36"/>
</dbReference>
<dbReference type="PDB" id="5B5E">
    <property type="method" value="X-ray"/>
    <property type="resolution" value="1.87 A"/>
    <property type="chains" value="M/m=1-36"/>
</dbReference>
<dbReference type="PDB" id="5B66">
    <property type="method" value="X-ray"/>
    <property type="resolution" value="1.85 A"/>
    <property type="chains" value="M/m=1-36"/>
</dbReference>
<dbReference type="PDB" id="5GTH">
    <property type="method" value="X-ray"/>
    <property type="resolution" value="2.50 A"/>
    <property type="chains" value="M/m=1-36"/>
</dbReference>
<dbReference type="PDB" id="5GTI">
    <property type="method" value="X-ray"/>
    <property type="resolution" value="2.50 A"/>
    <property type="chains" value="M/m=1-36"/>
</dbReference>
<dbReference type="PDB" id="5V2C">
    <property type="method" value="X-ray"/>
    <property type="resolution" value="1.90 A"/>
    <property type="chains" value="M/m=1-36"/>
</dbReference>
<dbReference type="PDB" id="5WS5">
    <property type="method" value="X-ray"/>
    <property type="resolution" value="2.35 A"/>
    <property type="chains" value="M/m=1-36"/>
</dbReference>
<dbReference type="PDB" id="5WS6">
    <property type="method" value="X-ray"/>
    <property type="resolution" value="2.35 A"/>
    <property type="chains" value="M/m=1-36"/>
</dbReference>
<dbReference type="PDB" id="6JLJ">
    <property type="method" value="X-ray"/>
    <property type="resolution" value="2.15 A"/>
    <property type="chains" value="M/m=1-36"/>
</dbReference>
<dbReference type="PDB" id="6JLK">
    <property type="method" value="X-ray"/>
    <property type="resolution" value="2.15 A"/>
    <property type="chains" value="M/m=1-36"/>
</dbReference>
<dbReference type="PDB" id="6JLL">
    <property type="method" value="X-ray"/>
    <property type="resolution" value="2.15 A"/>
    <property type="chains" value="M/m=1-36"/>
</dbReference>
<dbReference type="PDB" id="6JLM">
    <property type="method" value="X-ray"/>
    <property type="resolution" value="2.35 A"/>
    <property type="chains" value="M/m=1-36"/>
</dbReference>
<dbReference type="PDB" id="6JLN">
    <property type="method" value="X-ray"/>
    <property type="resolution" value="2.40 A"/>
    <property type="chains" value="M/m=1-36"/>
</dbReference>
<dbReference type="PDB" id="6JLO">
    <property type="method" value="X-ray"/>
    <property type="resolution" value="2.40 A"/>
    <property type="chains" value="M/m=1-36"/>
</dbReference>
<dbReference type="PDB" id="6JLP">
    <property type="method" value="X-ray"/>
    <property type="resolution" value="2.50 A"/>
    <property type="chains" value="M/m=1-36"/>
</dbReference>
<dbReference type="PDB" id="7CJI">
    <property type="method" value="X-ray"/>
    <property type="resolution" value="2.35 A"/>
    <property type="chains" value="M/m=1-36"/>
</dbReference>
<dbReference type="PDB" id="7CJJ">
    <property type="method" value="X-ray"/>
    <property type="resolution" value="2.40 A"/>
    <property type="chains" value="M/m=1-36"/>
</dbReference>
<dbReference type="PDB" id="7COU">
    <property type="method" value="X-ray"/>
    <property type="resolution" value="2.25 A"/>
    <property type="chains" value="M/m=1-36"/>
</dbReference>
<dbReference type="PDB" id="7CZL">
    <property type="method" value="EM"/>
    <property type="resolution" value="3.78 A"/>
    <property type="chains" value="M/m=1-33"/>
</dbReference>
<dbReference type="PDB" id="7D1T">
    <property type="method" value="EM"/>
    <property type="resolution" value="1.95 A"/>
    <property type="chains" value="M/m=1-34"/>
</dbReference>
<dbReference type="PDB" id="7D1U">
    <property type="method" value="EM"/>
    <property type="resolution" value="2.08 A"/>
    <property type="chains" value="M/m=1-34"/>
</dbReference>
<dbReference type="PDB" id="7DXA">
    <property type="method" value="EM"/>
    <property type="resolution" value="3.14 A"/>
    <property type="chains" value="m=1-36"/>
</dbReference>
<dbReference type="PDB" id="7DXH">
    <property type="method" value="EM"/>
    <property type="resolution" value="3.14 A"/>
    <property type="chains" value="m=1-36"/>
</dbReference>
<dbReference type="PDB" id="7EDA">
    <property type="method" value="EM"/>
    <property type="resolution" value="2.78 A"/>
    <property type="chains" value="M=3-32"/>
</dbReference>
<dbReference type="PDB" id="8GN0">
    <property type="method" value="X-ray"/>
    <property type="resolution" value="2.15 A"/>
    <property type="chains" value="M/m=1-36"/>
</dbReference>
<dbReference type="PDB" id="8GN1">
    <property type="method" value="X-ray"/>
    <property type="resolution" value="2.10 A"/>
    <property type="chains" value="M/m=1-36"/>
</dbReference>
<dbReference type="PDB" id="8GN2">
    <property type="method" value="X-ray"/>
    <property type="resolution" value="1.95 A"/>
    <property type="chains" value="M/m=1-36"/>
</dbReference>
<dbReference type="PDB" id="8IR5">
    <property type="method" value="X-ray"/>
    <property type="resolution" value="2.15 A"/>
    <property type="chains" value="M/m=1-36"/>
</dbReference>
<dbReference type="PDB" id="8IR6">
    <property type="method" value="X-ray"/>
    <property type="resolution" value="2.20 A"/>
    <property type="chains" value="M/m=1-36"/>
</dbReference>
<dbReference type="PDB" id="8IR7">
    <property type="method" value="X-ray"/>
    <property type="resolution" value="2.25 A"/>
    <property type="chains" value="M/m=1-36"/>
</dbReference>
<dbReference type="PDB" id="8IR8">
    <property type="method" value="X-ray"/>
    <property type="resolution" value="2.25 A"/>
    <property type="chains" value="M/m=1-36"/>
</dbReference>
<dbReference type="PDB" id="8IR9">
    <property type="method" value="X-ray"/>
    <property type="resolution" value="2.20 A"/>
    <property type="chains" value="M/m=1-36"/>
</dbReference>
<dbReference type="PDB" id="8IRA">
    <property type="method" value="X-ray"/>
    <property type="resolution" value="2.20 A"/>
    <property type="chains" value="M/m=1-36"/>
</dbReference>
<dbReference type="PDB" id="8IRB">
    <property type="method" value="X-ray"/>
    <property type="resolution" value="2.30 A"/>
    <property type="chains" value="M/m=1-36"/>
</dbReference>
<dbReference type="PDB" id="8IRC">
    <property type="method" value="X-ray"/>
    <property type="resolution" value="2.25 A"/>
    <property type="chains" value="M/m=1-36"/>
</dbReference>
<dbReference type="PDB" id="8IRD">
    <property type="method" value="X-ray"/>
    <property type="resolution" value="2.30 A"/>
    <property type="chains" value="M/m=1-36"/>
</dbReference>
<dbReference type="PDB" id="8IRE">
    <property type="method" value="X-ray"/>
    <property type="resolution" value="2.25 A"/>
    <property type="chains" value="M/m=1-36"/>
</dbReference>
<dbReference type="PDB" id="8IRF">
    <property type="method" value="X-ray"/>
    <property type="resolution" value="2.25 A"/>
    <property type="chains" value="M/m=1-36"/>
</dbReference>
<dbReference type="PDB" id="8IRG">
    <property type="method" value="X-ray"/>
    <property type="resolution" value="2.30 A"/>
    <property type="chains" value="M/m=1-36"/>
</dbReference>
<dbReference type="PDB" id="8IRH">
    <property type="method" value="X-ray"/>
    <property type="resolution" value="2.25 A"/>
    <property type="chains" value="M/m=1-36"/>
</dbReference>
<dbReference type="PDB" id="8IRI">
    <property type="method" value="X-ray"/>
    <property type="resolution" value="2.25 A"/>
    <property type="chains" value="M/m=1-36"/>
</dbReference>
<dbReference type="PDBsum" id="3A0B"/>
<dbReference type="PDBsum" id="3A0H"/>
<dbReference type="PDBsum" id="3WU2"/>
<dbReference type="PDBsum" id="4IL6"/>
<dbReference type="PDBsum" id="4UB6"/>
<dbReference type="PDBsum" id="4UB8"/>
<dbReference type="PDBsum" id="5B5E"/>
<dbReference type="PDBsum" id="5B66"/>
<dbReference type="PDBsum" id="5GTH"/>
<dbReference type="PDBsum" id="5GTI"/>
<dbReference type="PDBsum" id="5V2C"/>
<dbReference type="PDBsum" id="5WS5"/>
<dbReference type="PDBsum" id="5WS6"/>
<dbReference type="PDBsum" id="6JLJ"/>
<dbReference type="PDBsum" id="6JLK"/>
<dbReference type="PDBsum" id="6JLL"/>
<dbReference type="PDBsum" id="6JLM"/>
<dbReference type="PDBsum" id="6JLN"/>
<dbReference type="PDBsum" id="6JLO"/>
<dbReference type="PDBsum" id="6JLP"/>
<dbReference type="PDBsum" id="7CJI"/>
<dbReference type="PDBsum" id="7CJJ"/>
<dbReference type="PDBsum" id="7COU"/>
<dbReference type="PDBsum" id="7CZL"/>
<dbReference type="PDBsum" id="7D1T"/>
<dbReference type="PDBsum" id="7D1U"/>
<dbReference type="PDBsum" id="7DXA"/>
<dbReference type="PDBsum" id="7DXH"/>
<dbReference type="PDBsum" id="7EDA"/>
<dbReference type="PDBsum" id="8GN0"/>
<dbReference type="PDBsum" id="8GN1"/>
<dbReference type="PDBsum" id="8GN2"/>
<dbReference type="PDBsum" id="8IR5"/>
<dbReference type="PDBsum" id="8IR6"/>
<dbReference type="PDBsum" id="8IR7"/>
<dbReference type="PDBsum" id="8IR8"/>
<dbReference type="PDBsum" id="8IR9"/>
<dbReference type="PDBsum" id="8IRA"/>
<dbReference type="PDBsum" id="8IRB"/>
<dbReference type="PDBsum" id="8IRC"/>
<dbReference type="PDBsum" id="8IRD"/>
<dbReference type="PDBsum" id="8IRE"/>
<dbReference type="PDBsum" id="8IRF"/>
<dbReference type="PDBsum" id="8IRG"/>
<dbReference type="PDBsum" id="8IRH"/>
<dbReference type="PDBsum" id="8IRI"/>
<dbReference type="EMDB" id="EMD-30511"/>
<dbReference type="EMDB" id="EMD-30547"/>
<dbReference type="EMDB" id="EMD-30548"/>
<dbReference type="EMDB" id="EMD-30902"/>
<dbReference type="EMDB" id="EMD-30909"/>
<dbReference type="EMDB" id="EMD-31062"/>
<dbReference type="SMR" id="P12312"/>
<dbReference type="DIP" id="DIP-48868N"/>
<dbReference type="IntAct" id="P12312">
    <property type="interactions" value="1"/>
</dbReference>
<dbReference type="EvolutionaryTrace" id="P12312"/>
<dbReference type="GO" id="GO:0009523">
    <property type="term" value="C:photosystem II"/>
    <property type="evidence" value="ECO:0007669"/>
    <property type="project" value="UniProtKB-KW"/>
</dbReference>
<dbReference type="GO" id="GO:0031676">
    <property type="term" value="C:plasma membrane-derived thylakoid membrane"/>
    <property type="evidence" value="ECO:0007669"/>
    <property type="project" value="UniProtKB-SubCell"/>
</dbReference>
<dbReference type="GO" id="GO:0019684">
    <property type="term" value="P:photosynthesis, light reaction"/>
    <property type="evidence" value="ECO:0007669"/>
    <property type="project" value="InterPro"/>
</dbReference>
<dbReference type="HAMAP" id="MF_00438">
    <property type="entry name" value="PSII_PsbM"/>
    <property type="match status" value="1"/>
</dbReference>
<dbReference type="InterPro" id="IPR007826">
    <property type="entry name" value="PSII_PsbM"/>
</dbReference>
<dbReference type="InterPro" id="IPR037269">
    <property type="entry name" value="PSII_PsbM_sf"/>
</dbReference>
<dbReference type="NCBIfam" id="TIGR03038">
    <property type="entry name" value="PS_II_psbM"/>
    <property type="match status" value="1"/>
</dbReference>
<dbReference type="PANTHER" id="PTHR35774">
    <property type="entry name" value="PHOTOSYSTEM II REACTION CENTER PROTEIN M"/>
    <property type="match status" value="1"/>
</dbReference>
<dbReference type="PANTHER" id="PTHR35774:SF1">
    <property type="entry name" value="PHOTOSYSTEM II REACTION CENTER PROTEIN M"/>
    <property type="match status" value="1"/>
</dbReference>
<dbReference type="Pfam" id="PF05151">
    <property type="entry name" value="PsbM"/>
    <property type="match status" value="1"/>
</dbReference>
<dbReference type="SUPFAM" id="SSF161033">
    <property type="entry name" value="Photosystem II reaction center protein M, PsbM"/>
    <property type="match status" value="1"/>
</dbReference>